<evidence type="ECO:0007829" key="1">
    <source>
        <dbReference type="PDB" id="5DNK"/>
    </source>
</evidence>
<evidence type="ECO:0007829" key="2">
    <source>
        <dbReference type="PDB" id="5DO0"/>
    </source>
</evidence>
<organism>
    <name type="scientific">Rickettsia prowazekii (strain Madrid E)</name>
    <dbReference type="NCBI Taxonomy" id="272947"/>
    <lineage>
        <taxon>Bacteria</taxon>
        <taxon>Pseudomonadati</taxon>
        <taxon>Pseudomonadota</taxon>
        <taxon>Alphaproteobacteria</taxon>
        <taxon>Rickettsiales</taxon>
        <taxon>Rickettsiaceae</taxon>
        <taxon>Rickettsieae</taxon>
        <taxon>Rickettsia</taxon>
        <taxon>typhus group</taxon>
    </lineage>
</organism>
<gene>
    <name type="ordered locus">RP789</name>
</gene>
<dbReference type="EMBL" id="AJ235273">
    <property type="protein sequence ID" value="CAA15215.1"/>
    <property type="molecule type" value="Genomic_DNA"/>
</dbReference>
<dbReference type="EMBL" id="Y11779">
    <property type="protein sequence ID" value="CAA72463.1"/>
    <property type="molecule type" value="Genomic_DNA"/>
</dbReference>
<dbReference type="PIR" id="G71639">
    <property type="entry name" value="G71639"/>
</dbReference>
<dbReference type="RefSeq" id="NP_221139.1">
    <property type="nucleotide sequence ID" value="NC_000963.1"/>
</dbReference>
<dbReference type="RefSeq" id="WP_010886371.1">
    <property type="nucleotide sequence ID" value="NC_000963.1"/>
</dbReference>
<dbReference type="PDB" id="5DNK">
    <property type="method" value="X-ray"/>
    <property type="resolution" value="1.90 A"/>
    <property type="chains" value="A/B=1-553"/>
</dbReference>
<dbReference type="PDB" id="5DO0">
    <property type="method" value="X-ray"/>
    <property type="resolution" value="2.60 A"/>
    <property type="chains" value="A/B=1-553"/>
</dbReference>
<dbReference type="PDB" id="5DPD">
    <property type="method" value="X-ray"/>
    <property type="resolution" value="3.00 A"/>
    <property type="chains" value="A/B=1-553"/>
</dbReference>
<dbReference type="PDBsum" id="5DNK"/>
<dbReference type="PDBsum" id="5DO0"/>
<dbReference type="PDBsum" id="5DPD"/>
<dbReference type="SMR" id="O05979"/>
<dbReference type="STRING" id="272947.gene:17555858"/>
<dbReference type="EnsemblBacteria" id="CAA15215">
    <property type="protein sequence ID" value="CAA15215"/>
    <property type="gene ID" value="CAA15215"/>
</dbReference>
<dbReference type="KEGG" id="rpr:RP789"/>
<dbReference type="PATRIC" id="fig|272947.5.peg.825"/>
<dbReference type="eggNOG" id="COG2230">
    <property type="taxonomic scope" value="Bacteria"/>
</dbReference>
<dbReference type="eggNOG" id="COG4797">
    <property type="taxonomic scope" value="Bacteria"/>
</dbReference>
<dbReference type="HOGENOM" id="CLU_037603_1_1_5"/>
<dbReference type="OrthoDB" id="5298787at2"/>
<dbReference type="Proteomes" id="UP000002480">
    <property type="component" value="Chromosome"/>
</dbReference>
<dbReference type="CDD" id="cd02440">
    <property type="entry name" value="AdoMet_MTases"/>
    <property type="match status" value="1"/>
</dbReference>
<dbReference type="Gene3D" id="3.40.50.150">
    <property type="entry name" value="Vaccinia Virus protein VP39"/>
    <property type="match status" value="1"/>
</dbReference>
<dbReference type="InterPro" id="IPR050723">
    <property type="entry name" value="CFA/CMAS"/>
</dbReference>
<dbReference type="InterPro" id="IPR025714">
    <property type="entry name" value="Methyltranfer_dom"/>
</dbReference>
<dbReference type="InterPro" id="IPR018773">
    <property type="entry name" value="MeTrfase_reg_dom_prd"/>
</dbReference>
<dbReference type="InterPro" id="IPR048976">
    <property type="entry name" value="PKMT_C"/>
</dbReference>
<dbReference type="InterPro" id="IPR029063">
    <property type="entry name" value="SAM-dependent_MTases_sf"/>
</dbReference>
<dbReference type="PANTHER" id="PTHR43667">
    <property type="entry name" value="CYCLOPROPANE-FATTY-ACYL-PHOSPHOLIPID SYNTHASE"/>
    <property type="match status" value="1"/>
</dbReference>
<dbReference type="PANTHER" id="PTHR43667:SF2">
    <property type="entry name" value="FATTY ACID C-METHYL TRANSFERASE"/>
    <property type="match status" value="1"/>
</dbReference>
<dbReference type="Pfam" id="PF13847">
    <property type="entry name" value="Methyltransf_31"/>
    <property type="match status" value="1"/>
</dbReference>
<dbReference type="Pfam" id="PF10119">
    <property type="entry name" value="MethyTransf_Reg"/>
    <property type="match status" value="1"/>
</dbReference>
<dbReference type="Pfam" id="PF21782">
    <property type="entry name" value="PKMT_2nd"/>
    <property type="match status" value="1"/>
</dbReference>
<dbReference type="SUPFAM" id="SSF53335">
    <property type="entry name" value="S-adenosyl-L-methionine-dependent methyltransferases"/>
    <property type="match status" value="1"/>
</dbReference>
<protein>
    <recommendedName>
        <fullName>Uncharacterized protein RP789</fullName>
    </recommendedName>
</protein>
<keyword id="KW-0002">3D-structure</keyword>
<keyword id="KW-1185">Reference proteome</keyword>
<accession>O05979</accession>
<name>Y789_RICPR</name>
<proteinExistence type="evidence at protein level"/>
<sequence>MSLKSTTSSLTTNNHDKTINSVQSLVNGTGTVADHNPYDEVPYESYPYAITNPYHLSTLATLFGINAPEVENSKILELGCAAGGNLIPHAVLYPNAHFVGVDLSKVQIDEANKNVRALGLKNIEFHHCSITDIDDSFGKFDYIICHGVISWVPKIVRDKIFKVCNRNLSTNGIAYISYNTLPGWNMVRTIRDMMLYHSSSFTNIRDRIAQSRLLLEFVKDSLEHSKTPYAEVLKTEAGLLAKQTDHYLRHDHLEEENAQFYFHEFMNEARKHNLQYLADCNISTMYLGNMPPKVVEQLKAVNDIVRTEQYMDFITNRRFRTTLLCHNDLKINRNINNDDIKKFNIIFNVIPEKPLKEVDLNNATENLQFFLNGNKESNLSTTSPYMKAILYTFSENLNNPLSFKQVTSEANTKLNNTKLNEIKNELLNNAMKLVLQGYISITNQKHRSKPVLDKPKTTQMVIYQAKYTPSMWVTNLKHEPIGVNFFEKFALRYMDGRNDKKAIIEAILGHVEKGELTLSREGQKIENKEEIRKELESLFTPMIEKFCSNALLV</sequence>
<feature type="chain" id="PRO_0000101418" description="Uncharacterized protein RP789">
    <location>
        <begin position="1"/>
        <end position="553"/>
    </location>
</feature>
<feature type="helix" evidence="1">
    <location>
        <begin position="49"/>
        <end position="51"/>
    </location>
</feature>
<feature type="helix" evidence="1">
    <location>
        <begin position="53"/>
        <end position="62"/>
    </location>
</feature>
<feature type="helix" evidence="1">
    <location>
        <begin position="70"/>
        <end position="72"/>
    </location>
</feature>
<feature type="strand" evidence="1">
    <location>
        <begin position="74"/>
        <end position="78"/>
    </location>
</feature>
<feature type="helix" evidence="2">
    <location>
        <begin position="81"/>
        <end position="83"/>
    </location>
</feature>
<feature type="turn" evidence="1">
    <location>
        <begin position="84"/>
        <end position="86"/>
    </location>
</feature>
<feature type="helix" evidence="1">
    <location>
        <begin position="87"/>
        <end position="92"/>
    </location>
</feature>
<feature type="strand" evidence="1">
    <location>
        <begin position="96"/>
        <end position="103"/>
    </location>
</feature>
<feature type="helix" evidence="1">
    <location>
        <begin position="105"/>
        <end position="118"/>
    </location>
</feature>
<feature type="strand" evidence="1">
    <location>
        <begin position="121"/>
        <end position="128"/>
    </location>
</feature>
<feature type="helix" evidence="1">
    <location>
        <begin position="130"/>
        <end position="132"/>
    </location>
</feature>
<feature type="helix" evidence="1">
    <location>
        <begin position="135"/>
        <end position="137"/>
    </location>
</feature>
<feature type="strand" evidence="1">
    <location>
        <begin position="140"/>
        <end position="145"/>
    </location>
</feature>
<feature type="helix" evidence="1">
    <location>
        <begin position="149"/>
        <end position="151"/>
    </location>
</feature>
<feature type="helix" evidence="1">
    <location>
        <begin position="154"/>
        <end position="166"/>
    </location>
</feature>
<feature type="strand" evidence="1">
    <location>
        <begin position="168"/>
        <end position="180"/>
    </location>
</feature>
<feature type="turn" evidence="1">
    <location>
        <begin position="181"/>
        <end position="183"/>
    </location>
</feature>
<feature type="helix" evidence="1">
    <location>
        <begin position="184"/>
        <end position="197"/>
    </location>
</feature>
<feature type="helix" evidence="1">
    <location>
        <begin position="204"/>
        <end position="221"/>
    </location>
</feature>
<feature type="helix" evidence="1">
    <location>
        <begin position="228"/>
        <end position="242"/>
    </location>
</feature>
<feature type="helix" evidence="1">
    <location>
        <begin position="245"/>
        <end position="248"/>
    </location>
</feature>
<feature type="helix" evidence="1">
    <location>
        <begin position="250"/>
        <end position="253"/>
    </location>
</feature>
<feature type="helix" evidence="1">
    <location>
        <begin position="262"/>
        <end position="271"/>
    </location>
</feature>
<feature type="strand" evidence="1">
    <location>
        <begin position="274"/>
        <end position="281"/>
    </location>
</feature>
<feature type="helix" evidence="1">
    <location>
        <begin position="282"/>
        <end position="285"/>
    </location>
</feature>
<feature type="helix" evidence="1">
    <location>
        <begin position="292"/>
        <end position="301"/>
    </location>
</feature>
<feature type="helix" evidence="1">
    <location>
        <begin position="304"/>
        <end position="315"/>
    </location>
</feature>
<feature type="strand" evidence="1">
    <location>
        <begin position="319"/>
        <end position="326"/>
    </location>
</feature>
<feature type="helix" evidence="1">
    <location>
        <begin position="337"/>
        <end position="342"/>
    </location>
</feature>
<feature type="strand" evidence="1">
    <location>
        <begin position="343"/>
        <end position="346"/>
    </location>
</feature>
<feature type="strand" evidence="1">
    <location>
        <begin position="349"/>
        <end position="353"/>
    </location>
</feature>
<feature type="helix" evidence="1">
    <location>
        <begin position="355"/>
        <end position="357"/>
    </location>
</feature>
<feature type="strand" evidence="1">
    <location>
        <begin position="363"/>
        <end position="365"/>
    </location>
</feature>
<feature type="strand" evidence="1">
    <location>
        <begin position="367"/>
        <end position="373"/>
    </location>
</feature>
<feature type="strand" evidence="1">
    <location>
        <begin position="375"/>
        <end position="381"/>
    </location>
</feature>
<feature type="helix" evidence="1">
    <location>
        <begin position="384"/>
        <end position="395"/>
    </location>
</feature>
<feature type="turn" evidence="2">
    <location>
        <begin position="396"/>
        <end position="398"/>
    </location>
</feature>
<feature type="helix" evidence="1">
    <location>
        <begin position="403"/>
        <end position="413"/>
    </location>
</feature>
<feature type="turn" evidence="1">
    <location>
        <begin position="414"/>
        <end position="416"/>
    </location>
</feature>
<feature type="helix" evidence="1">
    <location>
        <begin position="419"/>
        <end position="435"/>
    </location>
</feature>
<feature type="strand" evidence="1">
    <location>
        <begin position="438"/>
        <end position="444"/>
    </location>
</feature>
<feature type="strand" evidence="1">
    <location>
        <begin position="452"/>
        <end position="454"/>
    </location>
</feature>
<feature type="helix" evidence="1">
    <location>
        <begin position="459"/>
        <end position="467"/>
    </location>
</feature>
<feature type="strand" evidence="1">
    <location>
        <begin position="471"/>
        <end position="474"/>
    </location>
</feature>
<feature type="strand" evidence="1">
    <location>
        <begin position="480"/>
        <end position="482"/>
    </location>
</feature>
<feature type="helix" evidence="1">
    <location>
        <begin position="485"/>
        <end position="492"/>
    </location>
</feature>
<feature type="strand" evidence="1">
    <location>
        <begin position="495"/>
        <end position="498"/>
    </location>
</feature>
<feature type="helix" evidence="1">
    <location>
        <begin position="500"/>
        <end position="512"/>
    </location>
</feature>
<feature type="strand" evidence="1">
    <location>
        <begin position="519"/>
        <end position="524"/>
    </location>
</feature>
<feature type="helix" evidence="1">
    <location>
        <begin position="528"/>
        <end position="548"/>
    </location>
</feature>
<reference key="1">
    <citation type="journal article" date="1998" name="Nature">
        <title>The genome sequence of Rickettsia prowazekii and the origin of mitochondria.</title>
        <authorList>
            <person name="Andersson S.G.E."/>
            <person name="Zomorodipour A."/>
            <person name="Andersson J.O."/>
            <person name="Sicheritz-Ponten T."/>
            <person name="Alsmark U.C.M."/>
            <person name="Podowski R.M."/>
            <person name="Naeslund A.K."/>
            <person name="Eriksson A.-S."/>
            <person name="Winkler H.H."/>
            <person name="Kurland C.G."/>
        </authorList>
    </citation>
    <scope>NUCLEOTIDE SEQUENCE [LARGE SCALE GENOMIC DNA]</scope>
    <source>
        <strain>Madrid E</strain>
    </source>
</reference>
<reference key="2">
    <citation type="journal article" date="1997" name="Microbiology">
        <title>Genomic rearrangements during evolution of the obligate intracellular parasite Rickettsia prowazekii as inferred from an analysis of 52015 bp nucleotide sequence.</title>
        <authorList>
            <person name="Andersson J.O."/>
            <person name="Andersson S.G.E."/>
        </authorList>
    </citation>
    <scope>NUCLEOTIDE SEQUENCE [GENOMIC DNA] OF 1-216</scope>
    <source>
        <strain>Madrid E</strain>
    </source>
</reference>